<reference key="1">
    <citation type="journal article" date="2007" name="J. Bacteriol.">
        <title>Genome sequence of Avery's virulent serotype 2 strain D39 of Streptococcus pneumoniae and comparison with that of unencapsulated laboratory strain R6.</title>
        <authorList>
            <person name="Lanie J.A."/>
            <person name="Ng W.-L."/>
            <person name="Kazmierczak K.M."/>
            <person name="Andrzejewski T.M."/>
            <person name="Davidsen T.M."/>
            <person name="Wayne K.J."/>
            <person name="Tettelin H."/>
            <person name="Glass J.I."/>
            <person name="Winkler M.E."/>
        </authorList>
    </citation>
    <scope>NUCLEOTIDE SEQUENCE [LARGE SCALE GENOMIC DNA]</scope>
    <source>
        <strain>D39 / NCTC 7466</strain>
    </source>
</reference>
<accession>Q04KG8</accession>
<comment type="function">
    <text evidence="1">Catalyzes the formation of the alpha-1,6-glucosidic linkages in glycogen by scission of a 1,4-alpha-linked oligosaccharide from growing alpha-1,4-glucan chains and the subsequent attachment of the oligosaccharide to the alpha-1,6 position.</text>
</comment>
<comment type="catalytic activity">
    <reaction evidence="1">
        <text>Transfers a segment of a (1-&gt;4)-alpha-D-glucan chain to a primary hydroxy group in a similar glucan chain.</text>
        <dbReference type="EC" id="2.4.1.18"/>
    </reaction>
</comment>
<comment type="pathway">
    <text evidence="1">Glycan biosynthesis; glycogen biosynthesis.</text>
</comment>
<comment type="subunit">
    <text evidence="1">Monomer.</text>
</comment>
<comment type="similarity">
    <text evidence="1">Belongs to the glycosyl hydrolase 13 family. GlgB subfamily.</text>
</comment>
<protein>
    <recommendedName>
        <fullName evidence="1">1,4-alpha-glucan branching enzyme GlgB</fullName>
        <ecNumber evidence="1">2.4.1.18</ecNumber>
    </recommendedName>
    <alternativeName>
        <fullName evidence="1">1,4-alpha-D-glucan:1,4-alpha-D-glucan 6-glucosyl-transferase</fullName>
    </alternativeName>
    <alternativeName>
        <fullName evidence="1">Alpha-(1-&gt;4)-glucan branching enzyme</fullName>
    </alternativeName>
    <alternativeName>
        <fullName evidence="1">Glycogen branching enzyme</fullName>
        <shortName evidence="1">BE</shortName>
    </alternativeName>
</protein>
<sequence length="642" mass="75542">MDNREALKTFMTGENFYLQHYLGAHREELNGEHGYTFRVWAPNAQAVHLVGDFTNWIENQIPMVRNDFGVWEVFTNMAQEGHIYKYHVTRQNGHQLMKIDPFAVRYEARPGTGAIVTELPEKKWKDGLWLARRKRWGFAERPVNIYEVHAGSWKRNPDGSPYSFAQLKDELIPYLVEMNYTHIEFMPLMSHPLGLSWGYQLMGYFALEHAYGRPEEFQDFVEECHTHNIGVIVDWVPGHFTINDDALAYYDGTPTFEYQDHNKAHNHGWGALNFDLGKNEVQSFLISCIKHWIDVYHLDGIRVDAVSNMLYLDYDDAPWTPNKDGGNLNYEGYYFLQRLNEVIKLEYPDVMMIAEESSSATKITGMKEIGGLGFDYKWNMGWMNDILRFYEEDPIYRKYDFNLVTFSFMYVFKENYLLPFSHDEVVHGKKSMMHKMWGDRYNQFAGLRNLYTYQICHPGKKLLFMGSEYGQFLEWKSEEQLEWSNLEDPMNAKMKYFTSQLNQFYKDHRCLWEIDTSYDGIEIIDADNRDQSVLSFIRKGKKGEMLVCIFNMVPVERKDFTIGLPVAGIYEEVWNTELEEWGGVWKEHNQTVQTQEGLWKDYEQTLTFTLPAMGASVWKIKRRLKSTKTVTNKNPKGVENEK</sequence>
<proteinExistence type="inferred from homology"/>
<feature type="chain" id="PRO_1000045002" description="1,4-alpha-glucan branching enzyme GlgB">
    <location>
        <begin position="1"/>
        <end position="642"/>
    </location>
</feature>
<feature type="active site" description="Nucleophile" evidence="1">
    <location>
        <position position="304"/>
    </location>
</feature>
<feature type="active site" description="Proton donor" evidence="1">
    <location>
        <position position="355"/>
    </location>
</feature>
<organism>
    <name type="scientific">Streptococcus pneumoniae serotype 2 (strain D39 / NCTC 7466)</name>
    <dbReference type="NCBI Taxonomy" id="373153"/>
    <lineage>
        <taxon>Bacteria</taxon>
        <taxon>Bacillati</taxon>
        <taxon>Bacillota</taxon>
        <taxon>Bacilli</taxon>
        <taxon>Lactobacillales</taxon>
        <taxon>Streptococcaceae</taxon>
        <taxon>Streptococcus</taxon>
    </lineage>
</organism>
<keyword id="KW-0119">Carbohydrate metabolism</keyword>
<keyword id="KW-0320">Glycogen biosynthesis</keyword>
<keyword id="KW-0321">Glycogen metabolism</keyword>
<keyword id="KW-0328">Glycosyltransferase</keyword>
<keyword id="KW-1185">Reference proteome</keyword>
<keyword id="KW-0808">Transferase</keyword>
<evidence type="ECO:0000255" key="1">
    <source>
        <dbReference type="HAMAP-Rule" id="MF_00685"/>
    </source>
</evidence>
<name>GLGB_STRP2</name>
<dbReference type="EC" id="2.4.1.18" evidence="1"/>
<dbReference type="EMBL" id="CP000410">
    <property type="protein sequence ID" value="ABJ55433.1"/>
    <property type="molecule type" value="Genomic_DNA"/>
</dbReference>
<dbReference type="RefSeq" id="WP_000370258.1">
    <property type="nucleotide sequence ID" value="NZ_JAMLJR010000014.1"/>
</dbReference>
<dbReference type="SMR" id="Q04KG8"/>
<dbReference type="CAZy" id="CBM48">
    <property type="family name" value="Carbohydrate-Binding Module Family 48"/>
</dbReference>
<dbReference type="CAZy" id="GH13">
    <property type="family name" value="Glycoside Hydrolase Family 13"/>
</dbReference>
<dbReference type="PaxDb" id="373153-SPD_1005"/>
<dbReference type="KEGG" id="spd:SPD_1005"/>
<dbReference type="eggNOG" id="COG0296">
    <property type="taxonomic scope" value="Bacteria"/>
</dbReference>
<dbReference type="HOGENOM" id="CLU_004245_4_0_9"/>
<dbReference type="BioCyc" id="SPNE373153:G1G6V-1093-MONOMER"/>
<dbReference type="UniPathway" id="UPA00164"/>
<dbReference type="Proteomes" id="UP000001452">
    <property type="component" value="Chromosome"/>
</dbReference>
<dbReference type="GO" id="GO:0005829">
    <property type="term" value="C:cytosol"/>
    <property type="evidence" value="ECO:0007669"/>
    <property type="project" value="TreeGrafter"/>
</dbReference>
<dbReference type="GO" id="GO:0003844">
    <property type="term" value="F:1,4-alpha-glucan branching enzyme activity"/>
    <property type="evidence" value="ECO:0007669"/>
    <property type="project" value="UniProtKB-UniRule"/>
</dbReference>
<dbReference type="GO" id="GO:0043169">
    <property type="term" value="F:cation binding"/>
    <property type="evidence" value="ECO:0007669"/>
    <property type="project" value="InterPro"/>
</dbReference>
<dbReference type="GO" id="GO:0004553">
    <property type="term" value="F:hydrolase activity, hydrolyzing O-glycosyl compounds"/>
    <property type="evidence" value="ECO:0007669"/>
    <property type="project" value="InterPro"/>
</dbReference>
<dbReference type="GO" id="GO:0005978">
    <property type="term" value="P:glycogen biosynthetic process"/>
    <property type="evidence" value="ECO:0007669"/>
    <property type="project" value="UniProtKB-UniRule"/>
</dbReference>
<dbReference type="CDD" id="cd11322">
    <property type="entry name" value="AmyAc_Glg_BE"/>
    <property type="match status" value="1"/>
</dbReference>
<dbReference type="CDD" id="cd02855">
    <property type="entry name" value="E_set_GBE_prok_N"/>
    <property type="match status" value="1"/>
</dbReference>
<dbReference type="FunFam" id="3.20.20.80:FF:000003">
    <property type="entry name" value="1,4-alpha-glucan branching enzyme GlgB"/>
    <property type="match status" value="1"/>
</dbReference>
<dbReference type="Gene3D" id="3.20.20.80">
    <property type="entry name" value="Glycosidases"/>
    <property type="match status" value="1"/>
</dbReference>
<dbReference type="Gene3D" id="2.60.40.1180">
    <property type="entry name" value="Golgi alpha-mannosidase II"/>
    <property type="match status" value="1"/>
</dbReference>
<dbReference type="Gene3D" id="2.60.40.10">
    <property type="entry name" value="Immunoglobulins"/>
    <property type="match status" value="1"/>
</dbReference>
<dbReference type="HAMAP" id="MF_00685">
    <property type="entry name" value="GlgB"/>
    <property type="match status" value="1"/>
</dbReference>
<dbReference type="InterPro" id="IPR006048">
    <property type="entry name" value="A-amylase/branching_C"/>
</dbReference>
<dbReference type="InterPro" id="IPR037439">
    <property type="entry name" value="Branching_enzy"/>
</dbReference>
<dbReference type="InterPro" id="IPR006407">
    <property type="entry name" value="GlgB"/>
</dbReference>
<dbReference type="InterPro" id="IPR044143">
    <property type="entry name" value="GlgB_N_E_set_prok"/>
</dbReference>
<dbReference type="InterPro" id="IPR006047">
    <property type="entry name" value="Glyco_hydro_13_cat_dom"/>
</dbReference>
<dbReference type="InterPro" id="IPR004193">
    <property type="entry name" value="Glyco_hydro_13_N"/>
</dbReference>
<dbReference type="InterPro" id="IPR013780">
    <property type="entry name" value="Glyco_hydro_b"/>
</dbReference>
<dbReference type="InterPro" id="IPR017853">
    <property type="entry name" value="Glycoside_hydrolase_SF"/>
</dbReference>
<dbReference type="InterPro" id="IPR013783">
    <property type="entry name" value="Ig-like_fold"/>
</dbReference>
<dbReference type="InterPro" id="IPR014756">
    <property type="entry name" value="Ig_E-set"/>
</dbReference>
<dbReference type="NCBIfam" id="TIGR01515">
    <property type="entry name" value="branching_enzym"/>
    <property type="match status" value="1"/>
</dbReference>
<dbReference type="NCBIfam" id="NF003811">
    <property type="entry name" value="PRK05402.1"/>
    <property type="match status" value="1"/>
</dbReference>
<dbReference type="NCBIfam" id="NF008967">
    <property type="entry name" value="PRK12313.1"/>
    <property type="match status" value="1"/>
</dbReference>
<dbReference type="PANTHER" id="PTHR43651">
    <property type="entry name" value="1,4-ALPHA-GLUCAN-BRANCHING ENZYME"/>
    <property type="match status" value="1"/>
</dbReference>
<dbReference type="PANTHER" id="PTHR43651:SF3">
    <property type="entry name" value="1,4-ALPHA-GLUCAN-BRANCHING ENZYME"/>
    <property type="match status" value="1"/>
</dbReference>
<dbReference type="Pfam" id="PF00128">
    <property type="entry name" value="Alpha-amylase"/>
    <property type="match status" value="2"/>
</dbReference>
<dbReference type="Pfam" id="PF02806">
    <property type="entry name" value="Alpha-amylase_C"/>
    <property type="match status" value="1"/>
</dbReference>
<dbReference type="Pfam" id="PF02922">
    <property type="entry name" value="CBM_48"/>
    <property type="match status" value="1"/>
</dbReference>
<dbReference type="PIRSF" id="PIRSF000463">
    <property type="entry name" value="GlgB"/>
    <property type="match status" value="1"/>
</dbReference>
<dbReference type="SMART" id="SM00642">
    <property type="entry name" value="Aamy"/>
    <property type="match status" value="1"/>
</dbReference>
<dbReference type="SUPFAM" id="SSF51445">
    <property type="entry name" value="(Trans)glycosidases"/>
    <property type="match status" value="1"/>
</dbReference>
<dbReference type="SUPFAM" id="SSF81296">
    <property type="entry name" value="E set domains"/>
    <property type="match status" value="1"/>
</dbReference>
<dbReference type="SUPFAM" id="SSF51011">
    <property type="entry name" value="Glycosyl hydrolase domain"/>
    <property type="match status" value="1"/>
</dbReference>
<gene>
    <name evidence="1" type="primary">glgB</name>
    <name type="ordered locus">SPD_1005</name>
</gene>